<accession>Q9KBI9</accession>
<sequence length="210" mass="22154">MSQAEIDFITQFRTIPTTCISDALDGLTNLTSTIKPLNENDQVVGPARTVQVASGDNLAVLKAMYEASPGDVIVIDAKGDCTRAIAGDFVLGMAKTLGIAGFVVDGAIRDIRASKALNFPIFCRGTTIAASKKTGIGNINVPISCGGVPIRPGDLIVGDADGVTVIPKGQEENVLQKAKKKQADDEARERAISDNVMAIRAYLEKMIHPS</sequence>
<gene>
    <name type="ordered locus">BH1938</name>
</gene>
<name>RRAAH_HALH5</name>
<dbReference type="EC" id="4.1.3.17"/>
<dbReference type="EC" id="4.1.1.112"/>
<dbReference type="EMBL" id="BA000004">
    <property type="protein sequence ID" value="BAB05657.1"/>
    <property type="molecule type" value="Genomic_DNA"/>
</dbReference>
<dbReference type="PIR" id="B83892">
    <property type="entry name" value="B83892"/>
</dbReference>
<dbReference type="RefSeq" id="WP_010898097.1">
    <property type="nucleotide sequence ID" value="NC_002570.2"/>
</dbReference>
<dbReference type="SMR" id="Q9KBI9"/>
<dbReference type="STRING" id="272558.gene:10727836"/>
<dbReference type="KEGG" id="bha:BH1938"/>
<dbReference type="eggNOG" id="COG0684">
    <property type="taxonomic scope" value="Bacteria"/>
</dbReference>
<dbReference type="HOGENOM" id="CLU_072626_3_2_9"/>
<dbReference type="OrthoDB" id="9784786at2"/>
<dbReference type="Proteomes" id="UP000001258">
    <property type="component" value="Chromosome"/>
</dbReference>
<dbReference type="GO" id="GO:0047443">
    <property type="term" value="F:4-hydroxy-4-methyl-2-oxoglutarate aldolase activity"/>
    <property type="evidence" value="ECO:0007669"/>
    <property type="project" value="UniProtKB-EC"/>
</dbReference>
<dbReference type="GO" id="GO:0046872">
    <property type="term" value="F:metal ion binding"/>
    <property type="evidence" value="ECO:0007669"/>
    <property type="project" value="UniProtKB-KW"/>
</dbReference>
<dbReference type="GO" id="GO:0008948">
    <property type="term" value="F:oxaloacetate decarboxylase activity"/>
    <property type="evidence" value="ECO:0007669"/>
    <property type="project" value="UniProtKB-EC"/>
</dbReference>
<dbReference type="CDD" id="cd16841">
    <property type="entry name" value="RraA_family"/>
    <property type="match status" value="1"/>
</dbReference>
<dbReference type="Gene3D" id="3.50.30.40">
    <property type="entry name" value="Ribonuclease E inhibitor RraA/RraA-like"/>
    <property type="match status" value="1"/>
</dbReference>
<dbReference type="InterPro" id="IPR005493">
    <property type="entry name" value="RraA/RraA-like"/>
</dbReference>
<dbReference type="InterPro" id="IPR036704">
    <property type="entry name" value="RraA/RraA-like_sf"/>
</dbReference>
<dbReference type="PANTHER" id="PTHR33254">
    <property type="entry name" value="4-HYDROXY-4-METHYL-2-OXOGLUTARATE ALDOLASE 3-RELATED"/>
    <property type="match status" value="1"/>
</dbReference>
<dbReference type="PANTHER" id="PTHR33254:SF4">
    <property type="entry name" value="4-HYDROXY-4-METHYL-2-OXOGLUTARATE ALDOLASE 3-RELATED"/>
    <property type="match status" value="1"/>
</dbReference>
<dbReference type="Pfam" id="PF03737">
    <property type="entry name" value="RraA-like"/>
    <property type="match status" value="1"/>
</dbReference>
<dbReference type="SUPFAM" id="SSF89562">
    <property type="entry name" value="RraA-like"/>
    <property type="match status" value="1"/>
</dbReference>
<comment type="function">
    <text evidence="1">Catalyzes the aldol cleavage of 4-hydroxy-4-methyl-2-oxoglutarate (HMG) into 2 molecules of pyruvate. Also contains a secondary oxaloacetate (OAA) decarboxylase activity due to the common pyruvate enolate transition state formed following C-C bond cleavage in the retro-aldol and decarboxylation reactions (By similarity).</text>
</comment>
<comment type="catalytic activity">
    <reaction>
        <text>4-hydroxy-4-methyl-2-oxoglutarate = 2 pyruvate</text>
        <dbReference type="Rhea" id="RHEA:22748"/>
        <dbReference type="ChEBI" id="CHEBI:15361"/>
        <dbReference type="ChEBI" id="CHEBI:58276"/>
        <dbReference type="EC" id="4.1.3.17"/>
    </reaction>
</comment>
<comment type="catalytic activity">
    <reaction>
        <text>oxaloacetate + H(+) = pyruvate + CO2</text>
        <dbReference type="Rhea" id="RHEA:15641"/>
        <dbReference type="ChEBI" id="CHEBI:15361"/>
        <dbReference type="ChEBI" id="CHEBI:15378"/>
        <dbReference type="ChEBI" id="CHEBI:16452"/>
        <dbReference type="ChEBI" id="CHEBI:16526"/>
        <dbReference type="EC" id="4.1.1.112"/>
    </reaction>
</comment>
<comment type="cofactor">
    <cofactor evidence="1">
        <name>a divalent metal cation</name>
        <dbReference type="ChEBI" id="CHEBI:60240"/>
    </cofactor>
    <text evidence="1">Divalent metal cation.</text>
</comment>
<comment type="subunit">
    <text evidence="1">Homotrimer.</text>
</comment>
<comment type="similarity">
    <text evidence="2">Belongs to the class II aldolase/RraA-like family.</text>
</comment>
<organism>
    <name type="scientific">Halalkalibacterium halodurans (strain ATCC BAA-125 / DSM 18197 / FERM 7344 / JCM 9153 / C-125)</name>
    <name type="common">Bacillus halodurans</name>
    <dbReference type="NCBI Taxonomy" id="272558"/>
    <lineage>
        <taxon>Bacteria</taxon>
        <taxon>Bacillati</taxon>
        <taxon>Bacillota</taxon>
        <taxon>Bacilli</taxon>
        <taxon>Bacillales</taxon>
        <taxon>Bacillaceae</taxon>
        <taxon>Halalkalibacterium (ex Joshi et al. 2022)</taxon>
    </lineage>
</organism>
<proteinExistence type="inferred from homology"/>
<evidence type="ECO:0000250" key="1"/>
<evidence type="ECO:0000305" key="2"/>
<keyword id="KW-0456">Lyase</keyword>
<keyword id="KW-0479">Metal-binding</keyword>
<keyword id="KW-1185">Reference proteome</keyword>
<protein>
    <recommendedName>
        <fullName>Putative 4-hydroxy-4-methyl-2-oxoglutarate aldolase</fullName>
        <shortName>HMG aldolase</shortName>
        <ecNumber>4.1.3.17</ecNumber>
    </recommendedName>
    <alternativeName>
        <fullName>Oxaloacetate decarboxylase</fullName>
        <shortName>OAA decarboxylase</shortName>
        <ecNumber>4.1.1.112</ecNumber>
    </alternativeName>
    <alternativeName>
        <fullName>Regulator of ribonuclease activity homolog</fullName>
    </alternativeName>
    <alternativeName>
        <fullName>RraA-like protein</fullName>
    </alternativeName>
</protein>
<reference key="1">
    <citation type="journal article" date="2000" name="Nucleic Acids Res.">
        <title>Complete genome sequence of the alkaliphilic bacterium Bacillus halodurans and genomic sequence comparison with Bacillus subtilis.</title>
        <authorList>
            <person name="Takami H."/>
            <person name="Nakasone K."/>
            <person name="Takaki Y."/>
            <person name="Maeno G."/>
            <person name="Sasaki R."/>
            <person name="Masui N."/>
            <person name="Fuji F."/>
            <person name="Hirama C."/>
            <person name="Nakamura Y."/>
            <person name="Ogasawara N."/>
            <person name="Kuhara S."/>
            <person name="Horikoshi K."/>
        </authorList>
    </citation>
    <scope>NUCLEOTIDE SEQUENCE [LARGE SCALE GENOMIC DNA]</scope>
    <source>
        <strain>ATCC BAA-125 / DSM 18197 / FERM 7344 / JCM 9153 / C-125</strain>
    </source>
</reference>
<feature type="chain" id="PRO_0000209655" description="Putative 4-hydroxy-4-methyl-2-oxoglutarate aldolase">
    <location>
        <begin position="1"/>
        <end position="210"/>
    </location>
</feature>
<feature type="binding site" evidence="1">
    <location>
        <begin position="87"/>
        <end position="90"/>
    </location>
    <ligand>
        <name>substrate</name>
    </ligand>
</feature>
<feature type="binding site" evidence="1">
    <location>
        <position position="109"/>
    </location>
    <ligand>
        <name>substrate</name>
    </ligand>
</feature>
<feature type="binding site" evidence="1">
    <location>
        <position position="110"/>
    </location>
    <ligand>
        <name>a divalent metal cation</name>
        <dbReference type="ChEBI" id="CHEBI:60240"/>
    </ligand>
</feature>